<feature type="transit peptide" description="Mitochondrion" evidence="3">
    <location>
        <begin position="1"/>
        <end position="38"/>
    </location>
</feature>
<feature type="chain" id="PRO_0000016844" description="Thymidine kinase 2, mitochondrial">
    <location>
        <begin position="39"/>
        <end position="270"/>
    </location>
</feature>
<feature type="region of interest" description="Disordered" evidence="4">
    <location>
        <begin position="1"/>
        <end position="54"/>
    </location>
</feature>
<feature type="compositionally biased region" description="Low complexity" evidence="4">
    <location>
        <begin position="13"/>
        <end position="34"/>
    </location>
</feature>
<feature type="compositionally biased region" description="Basic and acidic residues" evidence="4">
    <location>
        <begin position="42"/>
        <end position="54"/>
    </location>
</feature>
<feature type="active site" description="Proton acceptor" evidence="2">
    <location>
        <position position="138"/>
    </location>
</feature>
<feature type="binding site" evidence="2">
    <location>
        <begin position="62"/>
        <end position="70"/>
    </location>
    <ligand>
        <name>ATP</name>
        <dbReference type="ChEBI" id="CHEBI:30616"/>
    </ligand>
</feature>
<feature type="sequence conflict" description="In Ref. 1; AAF08104." evidence="7" ref="1">
    <original>P</original>
    <variation>L</variation>
    <location>
        <position position="14"/>
    </location>
</feature>
<feature type="sequence conflict" description="In Ref. 1; AAF08104." evidence="7" ref="1">
    <original>G</original>
    <variation>R</variation>
    <location>
        <position position="23"/>
    </location>
</feature>
<feature type="sequence conflict" description="In Ref. 1; AAF08104." evidence="7" ref="1">
    <original>G</original>
    <variation>S</variation>
    <location>
        <position position="155"/>
    </location>
</feature>
<feature type="sequence conflict" description="In Ref. 1; AAF08104." evidence="7" ref="1">
    <original>GP</original>
    <variation>WTLGLSDLQDSARNSPARARCHGPRA</variation>
    <location>
        <begin position="269"/>
        <end position="270"/>
    </location>
</feature>
<protein>
    <recommendedName>
        <fullName evidence="7">Thymidine kinase 2, mitochondrial</fullName>
        <ecNumber evidence="6">2.7.1.21</ecNumber>
    </recommendedName>
    <alternativeName>
        <fullName evidence="7">2'-deoxyuridine kinase TK2</fullName>
        <ecNumber evidence="6">2.7.1.74</ecNumber>
    </alternativeName>
    <alternativeName>
        <fullName evidence="7">Deoxycytidine kinase TK2</fullName>
        <ecNumber evidence="6">2.7.1.-</ecNumber>
    </alternativeName>
    <alternativeName>
        <fullName>Mt-TK</fullName>
    </alternativeName>
</protein>
<gene>
    <name type="primary">Tk2</name>
</gene>
<name>KITM_MOUSE</name>
<proteinExistence type="evidence at protein level"/>
<dbReference type="EC" id="2.7.1.21" evidence="6"/>
<dbReference type="EC" id="2.7.1.74" evidence="6"/>
<dbReference type="EC" id="2.7.1.-" evidence="6"/>
<dbReference type="EMBL" id="AF105217">
    <property type="protein sequence ID" value="AAF08104.1"/>
    <property type="molecule type" value="mRNA"/>
</dbReference>
<dbReference type="EMBL" id="AJ249341">
    <property type="protein sequence ID" value="CAC07190.2"/>
    <property type="molecule type" value="mRNA"/>
</dbReference>
<dbReference type="CCDS" id="CCDS22573.1"/>
<dbReference type="SMR" id="Q9R088"/>
<dbReference type="FunCoup" id="Q9R088">
    <property type="interactions" value="1357"/>
</dbReference>
<dbReference type="STRING" id="10090.ENSMUSP00000053616"/>
<dbReference type="PhosphoSitePlus" id="Q9R088"/>
<dbReference type="PaxDb" id="10090-ENSMUSP00000053616"/>
<dbReference type="ProteomicsDB" id="263552"/>
<dbReference type="Pumba" id="Q9R088"/>
<dbReference type="AGR" id="MGI:1913266"/>
<dbReference type="MGI" id="MGI:1913266">
    <property type="gene designation" value="Tk2"/>
</dbReference>
<dbReference type="eggNOG" id="KOG4235">
    <property type="taxonomic scope" value="Eukaryota"/>
</dbReference>
<dbReference type="InParanoid" id="Q9R088"/>
<dbReference type="PhylomeDB" id="Q9R088"/>
<dbReference type="BRENDA" id="2.7.1.21">
    <property type="organism ID" value="3474"/>
</dbReference>
<dbReference type="Reactome" id="R-MMU-73614">
    <property type="pathway name" value="Pyrimidine salvage"/>
</dbReference>
<dbReference type="SABIO-RK" id="Q9R088"/>
<dbReference type="PRO" id="PR:Q9R088"/>
<dbReference type="Proteomes" id="UP000000589">
    <property type="component" value="Unplaced"/>
</dbReference>
<dbReference type="RNAct" id="Q9R088">
    <property type="molecule type" value="protein"/>
</dbReference>
<dbReference type="GO" id="GO:0005743">
    <property type="term" value="C:mitochondrial inner membrane"/>
    <property type="evidence" value="ECO:0007005"/>
    <property type="project" value="MGI"/>
</dbReference>
<dbReference type="GO" id="GO:0005739">
    <property type="term" value="C:mitochondrion"/>
    <property type="evidence" value="ECO:0000314"/>
    <property type="project" value="UniProtKB"/>
</dbReference>
<dbReference type="GO" id="GO:0005524">
    <property type="term" value="F:ATP binding"/>
    <property type="evidence" value="ECO:0007669"/>
    <property type="project" value="UniProtKB-KW"/>
</dbReference>
<dbReference type="GO" id="GO:0004137">
    <property type="term" value="F:deoxycytidine kinase activity"/>
    <property type="evidence" value="ECO:0000314"/>
    <property type="project" value="UniProtKB"/>
</dbReference>
<dbReference type="GO" id="GO:0004797">
    <property type="term" value="F:thymidine kinase activity"/>
    <property type="evidence" value="ECO:0000314"/>
    <property type="project" value="UniProtKB"/>
</dbReference>
<dbReference type="GO" id="GO:0009262">
    <property type="term" value="P:deoxyribonucleotide metabolic process"/>
    <property type="evidence" value="ECO:0000315"/>
    <property type="project" value="MGI"/>
</dbReference>
<dbReference type="GO" id="GO:0071897">
    <property type="term" value="P:DNA biosynthetic process"/>
    <property type="evidence" value="ECO:0007669"/>
    <property type="project" value="UniProtKB-KW"/>
</dbReference>
<dbReference type="GO" id="GO:0032042">
    <property type="term" value="P:mitochondrial DNA metabolic process"/>
    <property type="evidence" value="ECO:0000315"/>
    <property type="project" value="MGI"/>
</dbReference>
<dbReference type="GO" id="GO:0006264">
    <property type="term" value="P:mitochondrial DNA replication"/>
    <property type="evidence" value="ECO:0000315"/>
    <property type="project" value="MGI"/>
</dbReference>
<dbReference type="CDD" id="cd01673">
    <property type="entry name" value="dNK"/>
    <property type="match status" value="1"/>
</dbReference>
<dbReference type="FunFam" id="3.40.50.300:FF:000998">
    <property type="entry name" value="Thymidine kinase 2, mitochondrial"/>
    <property type="match status" value="1"/>
</dbReference>
<dbReference type="Gene3D" id="3.40.50.300">
    <property type="entry name" value="P-loop containing nucleotide triphosphate hydrolases"/>
    <property type="match status" value="1"/>
</dbReference>
<dbReference type="InterPro" id="IPR002624">
    <property type="entry name" value="DCK/DGK"/>
</dbReference>
<dbReference type="InterPro" id="IPR050566">
    <property type="entry name" value="Deoxyribonucleoside_kinase"/>
</dbReference>
<dbReference type="InterPro" id="IPR031314">
    <property type="entry name" value="DNK_dom"/>
</dbReference>
<dbReference type="InterPro" id="IPR027417">
    <property type="entry name" value="P-loop_NTPase"/>
</dbReference>
<dbReference type="PANTHER" id="PTHR10513">
    <property type="entry name" value="DEOXYNUCLEOSIDE KINASE"/>
    <property type="match status" value="1"/>
</dbReference>
<dbReference type="PANTHER" id="PTHR10513:SF24">
    <property type="entry name" value="THYMIDINE KINASE 2, MITOCHONDRIAL"/>
    <property type="match status" value="1"/>
</dbReference>
<dbReference type="Pfam" id="PF01712">
    <property type="entry name" value="dNK"/>
    <property type="match status" value="1"/>
</dbReference>
<dbReference type="PIRSF" id="PIRSF000705">
    <property type="entry name" value="DNK"/>
    <property type="match status" value="1"/>
</dbReference>
<dbReference type="SUPFAM" id="SSF52540">
    <property type="entry name" value="P-loop containing nucleoside triphosphate hydrolases"/>
    <property type="match status" value="1"/>
</dbReference>
<comment type="function">
    <text evidence="1 6">Phosphorylates thymidine, deoxycytidine, and deoxyuridine in the mitochondrial matrix (PubMed:11023833). In non-replicating cells, where cytosolic dNTP synthesis is down-regulated, mtDNA synthesis depends solely on TK2 and DGUOK (By similarity).</text>
</comment>
<comment type="catalytic activity">
    <reaction evidence="6">
        <text>thymidine + ATP = dTMP + ADP + H(+)</text>
        <dbReference type="Rhea" id="RHEA:19129"/>
        <dbReference type="ChEBI" id="CHEBI:15378"/>
        <dbReference type="ChEBI" id="CHEBI:17748"/>
        <dbReference type="ChEBI" id="CHEBI:30616"/>
        <dbReference type="ChEBI" id="CHEBI:63528"/>
        <dbReference type="ChEBI" id="CHEBI:456216"/>
        <dbReference type="EC" id="2.7.1.21"/>
    </reaction>
    <physiologicalReaction direction="left-to-right" evidence="6">
        <dbReference type="Rhea" id="RHEA:19130"/>
    </physiologicalReaction>
</comment>
<comment type="catalytic activity">
    <reaction evidence="6">
        <text>2'-deoxycytidine + ATP = dCMP + ADP + H(+)</text>
        <dbReference type="Rhea" id="RHEA:46040"/>
        <dbReference type="ChEBI" id="CHEBI:15378"/>
        <dbReference type="ChEBI" id="CHEBI:15698"/>
        <dbReference type="ChEBI" id="CHEBI:30616"/>
        <dbReference type="ChEBI" id="CHEBI:57566"/>
        <dbReference type="ChEBI" id="CHEBI:456216"/>
        <dbReference type="EC" id="2.7.1.74"/>
    </reaction>
    <physiologicalReaction direction="left-to-right" evidence="6">
        <dbReference type="Rhea" id="RHEA:46041"/>
    </physiologicalReaction>
</comment>
<comment type="catalytic activity">
    <reaction evidence="6">
        <text>2'-deoxyuridine + ATP = dUMP + ADP + H(+)</text>
        <dbReference type="Rhea" id="RHEA:28206"/>
        <dbReference type="ChEBI" id="CHEBI:15378"/>
        <dbReference type="ChEBI" id="CHEBI:16450"/>
        <dbReference type="ChEBI" id="CHEBI:30616"/>
        <dbReference type="ChEBI" id="CHEBI:246422"/>
        <dbReference type="ChEBI" id="CHEBI:456216"/>
    </reaction>
    <physiologicalReaction direction="left-to-right" evidence="6">
        <dbReference type="Rhea" id="RHEA:28207"/>
    </physiologicalReaction>
</comment>
<comment type="biophysicochemical properties">
    <kinetics>
        <KM evidence="6">3.4 uM for thymidine</KM>
        <KM evidence="6">25.1 uM for deoxycytidine</KM>
        <Vmax evidence="6">64.0 nmol/min/mg enzyme with thymidine as substrate</Vmax>
        <Vmax evidence="6">270.0 nmol/min/mg enzyme with deoxycytidine as substrate</Vmax>
    </kinetics>
</comment>
<comment type="subunit">
    <text evidence="6">Homodimer.</text>
</comment>
<comment type="subcellular location">
    <subcellularLocation>
        <location evidence="5 6">Mitochondrion</location>
    </subcellularLocation>
</comment>
<comment type="tissue specificity">
    <text evidence="6">Found in most tissues; highly expressed in liver.</text>
</comment>
<comment type="similarity">
    <text evidence="7">Belongs to the DCK/DGK family.</text>
</comment>
<organism>
    <name type="scientific">Mus musculus</name>
    <name type="common">Mouse</name>
    <dbReference type="NCBI Taxonomy" id="10090"/>
    <lineage>
        <taxon>Eukaryota</taxon>
        <taxon>Metazoa</taxon>
        <taxon>Chordata</taxon>
        <taxon>Craniata</taxon>
        <taxon>Vertebrata</taxon>
        <taxon>Euteleostomi</taxon>
        <taxon>Mammalia</taxon>
        <taxon>Eutheria</taxon>
        <taxon>Euarchontoglires</taxon>
        <taxon>Glires</taxon>
        <taxon>Rodentia</taxon>
        <taxon>Myomorpha</taxon>
        <taxon>Muroidea</taxon>
        <taxon>Muridae</taxon>
        <taxon>Murinae</taxon>
        <taxon>Mus</taxon>
        <taxon>Mus</taxon>
    </lineage>
</organism>
<sequence>MLLRSLRSWAARSPRSVGPGSSGSPGSLDSGAGPLWAPRRAWPPDKDRENDKEKKAVVCIEGNIASGKTTCLEFFSNTTDVEVLMEPVLKWRNVHGHNPLSLMYHDASRWGLTLQTYVQLTMLDQHTRPQMSPVRLMERSIYSARYIFVENLYRGGKMPEVDYAILSEWFDWIVRNIDVSVDLIVYLRTTPEICYQRLKMRCREEEKVIPMEYLHAIHRLYEEWLVNGSLFPAAAPVLVIEADHNLEKMLELFEQNRARILTPENWKHGP</sequence>
<keyword id="KW-0067">ATP-binding</keyword>
<keyword id="KW-0237">DNA synthesis</keyword>
<keyword id="KW-0418">Kinase</keyword>
<keyword id="KW-0496">Mitochondrion</keyword>
<keyword id="KW-0547">Nucleotide-binding</keyword>
<keyword id="KW-1185">Reference proteome</keyword>
<keyword id="KW-0808">Transferase</keyword>
<keyword id="KW-0809">Transit peptide</keyword>
<accession>Q9R088</accession>
<reference key="1">
    <citation type="journal article" date="1999" name="FEBS Lett.">
        <title>Cloning of mouse mitochondrial thymidine kinase 2 cDNA.</title>
        <authorList>
            <person name="Wettin K."/>
            <person name="Johansson M."/>
            <person name="Zheng X."/>
            <person name="Zhu C."/>
            <person name="Karlsson A."/>
        </authorList>
    </citation>
    <scope>NUCLEOTIDE SEQUENCE [MRNA]</scope>
    <scope>SUBCELLULAR LOCATION</scope>
</reference>
<reference key="2">
    <citation type="journal article" date="2000" name="Biochem. J.">
        <title>Cloning and characterization of full length mouse thymidine kinase 2: the N -terminal sequence directs import of the precursor protein into mitochondria.</title>
        <authorList>
            <person name="Wang L."/>
            <person name="Eriksson S."/>
        </authorList>
    </citation>
    <scope>NUCLEOTIDE SEQUENCE [MRNA]</scope>
    <scope>FUNCTION</scope>
    <scope>CATALYTIC ACTIVITY</scope>
    <scope>SUBUNIT</scope>
    <scope>SUBCELLULAR LOCATION</scope>
    <scope>TISSUE SPECIFICITY</scope>
    <source>
        <strain>C57BL/6J</strain>
        <tissue>Brain</tissue>
    </source>
</reference>
<evidence type="ECO:0000250" key="1">
    <source>
        <dbReference type="UniProtKB" id="O00142"/>
    </source>
</evidence>
<evidence type="ECO:0000250" key="2">
    <source>
        <dbReference type="UniProtKB" id="O57203"/>
    </source>
</evidence>
<evidence type="ECO:0000255" key="3"/>
<evidence type="ECO:0000256" key="4">
    <source>
        <dbReference type="SAM" id="MobiDB-lite"/>
    </source>
</evidence>
<evidence type="ECO:0000269" key="5">
    <source>
    </source>
</evidence>
<evidence type="ECO:0000269" key="6">
    <source>
    </source>
</evidence>
<evidence type="ECO:0000305" key="7"/>